<evidence type="ECO:0000255" key="1">
    <source>
        <dbReference type="HAMAP-Rule" id="MF_00473"/>
    </source>
</evidence>
<organism>
    <name type="scientific">Yersinia pseudotuberculosis serotype O:3 (strain YPIII)</name>
    <dbReference type="NCBI Taxonomy" id="502800"/>
    <lineage>
        <taxon>Bacteria</taxon>
        <taxon>Pseudomonadati</taxon>
        <taxon>Pseudomonadota</taxon>
        <taxon>Gammaproteobacteria</taxon>
        <taxon>Enterobacterales</taxon>
        <taxon>Yersiniaceae</taxon>
        <taxon>Yersinia</taxon>
    </lineage>
</organism>
<proteinExistence type="inferred from homology"/>
<reference key="1">
    <citation type="submission" date="2008-02" db="EMBL/GenBank/DDBJ databases">
        <title>Complete sequence of Yersinia pseudotuberculosis YPIII.</title>
        <authorList>
            <consortium name="US DOE Joint Genome Institute"/>
            <person name="Copeland A."/>
            <person name="Lucas S."/>
            <person name="Lapidus A."/>
            <person name="Glavina del Rio T."/>
            <person name="Dalin E."/>
            <person name="Tice H."/>
            <person name="Bruce D."/>
            <person name="Goodwin L."/>
            <person name="Pitluck S."/>
            <person name="Munk A.C."/>
            <person name="Brettin T."/>
            <person name="Detter J.C."/>
            <person name="Han C."/>
            <person name="Tapia R."/>
            <person name="Schmutz J."/>
            <person name="Larimer F."/>
            <person name="Land M."/>
            <person name="Hauser L."/>
            <person name="Challacombe J.F."/>
            <person name="Green L."/>
            <person name="Lindler L.E."/>
            <person name="Nikolich M.P."/>
            <person name="Richardson P."/>
        </authorList>
    </citation>
    <scope>NUCLEOTIDE SEQUENCE [LARGE SCALE GENOMIC DNA]</scope>
    <source>
        <strain>YPIII</strain>
    </source>
</reference>
<dbReference type="EC" id="5.3.1.9" evidence="1"/>
<dbReference type="EMBL" id="CP000950">
    <property type="protein sequence ID" value="ACA66678.1"/>
    <property type="molecule type" value="Genomic_DNA"/>
</dbReference>
<dbReference type="RefSeq" id="WP_002212085.1">
    <property type="nucleotide sequence ID" value="NZ_CP009792.1"/>
</dbReference>
<dbReference type="SMR" id="B1JJM7"/>
<dbReference type="GeneID" id="57975003"/>
<dbReference type="KEGG" id="ypy:YPK_0373"/>
<dbReference type="PATRIC" id="fig|502800.11.peg.976"/>
<dbReference type="UniPathway" id="UPA00109">
    <property type="reaction ID" value="UER00181"/>
</dbReference>
<dbReference type="UniPathway" id="UPA00138"/>
<dbReference type="GO" id="GO:0005829">
    <property type="term" value="C:cytosol"/>
    <property type="evidence" value="ECO:0007669"/>
    <property type="project" value="TreeGrafter"/>
</dbReference>
<dbReference type="GO" id="GO:0097367">
    <property type="term" value="F:carbohydrate derivative binding"/>
    <property type="evidence" value="ECO:0007669"/>
    <property type="project" value="InterPro"/>
</dbReference>
<dbReference type="GO" id="GO:0004347">
    <property type="term" value="F:glucose-6-phosphate isomerase activity"/>
    <property type="evidence" value="ECO:0007669"/>
    <property type="project" value="UniProtKB-UniRule"/>
</dbReference>
<dbReference type="GO" id="GO:0048029">
    <property type="term" value="F:monosaccharide binding"/>
    <property type="evidence" value="ECO:0007669"/>
    <property type="project" value="TreeGrafter"/>
</dbReference>
<dbReference type="GO" id="GO:0006094">
    <property type="term" value="P:gluconeogenesis"/>
    <property type="evidence" value="ECO:0007669"/>
    <property type="project" value="UniProtKB-UniRule"/>
</dbReference>
<dbReference type="GO" id="GO:0051156">
    <property type="term" value="P:glucose 6-phosphate metabolic process"/>
    <property type="evidence" value="ECO:0007669"/>
    <property type="project" value="TreeGrafter"/>
</dbReference>
<dbReference type="GO" id="GO:0006096">
    <property type="term" value="P:glycolytic process"/>
    <property type="evidence" value="ECO:0007669"/>
    <property type="project" value="UniProtKB-UniRule"/>
</dbReference>
<dbReference type="CDD" id="cd05015">
    <property type="entry name" value="SIS_PGI_1"/>
    <property type="match status" value="1"/>
</dbReference>
<dbReference type="CDD" id="cd05016">
    <property type="entry name" value="SIS_PGI_2"/>
    <property type="match status" value="1"/>
</dbReference>
<dbReference type="FunFam" id="1.10.1390.10:FF:000001">
    <property type="entry name" value="Glucose-6-phosphate isomerase"/>
    <property type="match status" value="1"/>
</dbReference>
<dbReference type="FunFam" id="3.40.50.10490:FF:000004">
    <property type="entry name" value="Glucose-6-phosphate isomerase"/>
    <property type="match status" value="1"/>
</dbReference>
<dbReference type="Gene3D" id="1.10.1390.10">
    <property type="match status" value="1"/>
</dbReference>
<dbReference type="Gene3D" id="3.40.50.10490">
    <property type="entry name" value="Glucose-6-phosphate isomerase like protein, domain 1"/>
    <property type="match status" value="2"/>
</dbReference>
<dbReference type="HAMAP" id="MF_00473">
    <property type="entry name" value="G6P_isomerase"/>
    <property type="match status" value="1"/>
</dbReference>
<dbReference type="InterPro" id="IPR001672">
    <property type="entry name" value="G6P_Isomerase"/>
</dbReference>
<dbReference type="InterPro" id="IPR023096">
    <property type="entry name" value="G6P_Isomerase_C"/>
</dbReference>
<dbReference type="InterPro" id="IPR018189">
    <property type="entry name" value="Phosphoglucose_isomerase_CS"/>
</dbReference>
<dbReference type="InterPro" id="IPR046348">
    <property type="entry name" value="SIS_dom_sf"/>
</dbReference>
<dbReference type="InterPro" id="IPR035476">
    <property type="entry name" value="SIS_PGI_1"/>
</dbReference>
<dbReference type="InterPro" id="IPR035482">
    <property type="entry name" value="SIS_PGI_2"/>
</dbReference>
<dbReference type="NCBIfam" id="NF001211">
    <property type="entry name" value="PRK00179.1"/>
    <property type="match status" value="1"/>
</dbReference>
<dbReference type="PANTHER" id="PTHR11469">
    <property type="entry name" value="GLUCOSE-6-PHOSPHATE ISOMERASE"/>
    <property type="match status" value="1"/>
</dbReference>
<dbReference type="PANTHER" id="PTHR11469:SF1">
    <property type="entry name" value="GLUCOSE-6-PHOSPHATE ISOMERASE"/>
    <property type="match status" value="1"/>
</dbReference>
<dbReference type="Pfam" id="PF00342">
    <property type="entry name" value="PGI"/>
    <property type="match status" value="1"/>
</dbReference>
<dbReference type="PRINTS" id="PR00662">
    <property type="entry name" value="G6PISOMERASE"/>
</dbReference>
<dbReference type="SUPFAM" id="SSF53697">
    <property type="entry name" value="SIS domain"/>
    <property type="match status" value="1"/>
</dbReference>
<dbReference type="PROSITE" id="PS00765">
    <property type="entry name" value="P_GLUCOSE_ISOMERASE_1"/>
    <property type="match status" value="1"/>
</dbReference>
<dbReference type="PROSITE" id="PS00174">
    <property type="entry name" value="P_GLUCOSE_ISOMERASE_2"/>
    <property type="match status" value="1"/>
</dbReference>
<dbReference type="PROSITE" id="PS51463">
    <property type="entry name" value="P_GLUCOSE_ISOMERASE_3"/>
    <property type="match status" value="1"/>
</dbReference>
<sequence>MKNINPSQTAAWKALQQHFEQMKDVTISSLFAKDDQRFNRFSATFDDQMLVDFSKNRITSETLEKLQDLAKETDLAGAIKSMFSGEKINRTEDRAVLHIALRNRSNTPIVVDGKDVMPEVNAVLAKMKQFCDRVISGDWKGYTGKAITDVVNIGIGGSDLGPYMVTEALRPYKNHLNMHFVSNVDGTHIAEALKPLNPETTLFLVASKTFTTQETMTNAHSARDWFLSAAGDPAHVAKHFAALSTNAKAVGEFGIDTNNMFEFWDWVGGRYSLWSAIGLSIALSVGFEHFEQLLSGAHAMDKHFAETPAEKNLPVLLALIGIWYNNFFGAETEAILPYDQYMHRFPAYFQQGNMESNGKYVDRNGHPVDYQTGPIIWGEPGTNGQHAFYQLIHQGTKLIPCDFIAPAISHNPLSDHHAKLLSNFFAQTEALAFGKSLEDVEAEFAAAGKTPEQVAHVAPFKVFEGNRPTNSILLREITPFSLGALIALYEHKIFTQGVILNIYTFDQWGVELGKQLANRILPELADDQEVTSHDSSTNALINRFKNWR</sequence>
<comment type="function">
    <text evidence="1">Catalyzes the reversible isomerization of glucose-6-phosphate to fructose-6-phosphate.</text>
</comment>
<comment type="catalytic activity">
    <reaction evidence="1">
        <text>alpha-D-glucose 6-phosphate = beta-D-fructose 6-phosphate</text>
        <dbReference type="Rhea" id="RHEA:11816"/>
        <dbReference type="ChEBI" id="CHEBI:57634"/>
        <dbReference type="ChEBI" id="CHEBI:58225"/>
        <dbReference type="EC" id="5.3.1.9"/>
    </reaction>
</comment>
<comment type="pathway">
    <text evidence="1">Carbohydrate biosynthesis; gluconeogenesis.</text>
</comment>
<comment type="pathway">
    <text evidence="1">Carbohydrate degradation; glycolysis; D-glyceraldehyde 3-phosphate and glycerone phosphate from D-glucose: step 2/4.</text>
</comment>
<comment type="subcellular location">
    <subcellularLocation>
        <location evidence="1">Cytoplasm</location>
    </subcellularLocation>
</comment>
<comment type="similarity">
    <text evidence="1">Belongs to the GPI family.</text>
</comment>
<protein>
    <recommendedName>
        <fullName evidence="1">Glucose-6-phosphate isomerase</fullName>
        <shortName evidence="1">GPI</shortName>
        <ecNumber evidence="1">5.3.1.9</ecNumber>
    </recommendedName>
    <alternativeName>
        <fullName evidence="1">Phosphoglucose isomerase</fullName>
        <shortName evidence="1">PGI</shortName>
    </alternativeName>
    <alternativeName>
        <fullName evidence="1">Phosphohexose isomerase</fullName>
        <shortName evidence="1">PHI</shortName>
    </alternativeName>
</protein>
<accession>B1JJM7</accession>
<feature type="chain" id="PRO_1000125781" description="Glucose-6-phosphate isomerase">
    <location>
        <begin position="1"/>
        <end position="548"/>
    </location>
</feature>
<feature type="active site" description="Proton donor" evidence="1">
    <location>
        <position position="355"/>
    </location>
</feature>
<feature type="active site" evidence="1">
    <location>
        <position position="386"/>
    </location>
</feature>
<feature type="active site" evidence="1">
    <location>
        <position position="514"/>
    </location>
</feature>
<name>G6PI_YERPY</name>
<gene>
    <name evidence="1" type="primary">pgi</name>
    <name type="ordered locus">YPK_0373</name>
</gene>
<keyword id="KW-0963">Cytoplasm</keyword>
<keyword id="KW-0312">Gluconeogenesis</keyword>
<keyword id="KW-0324">Glycolysis</keyword>
<keyword id="KW-0413">Isomerase</keyword>